<accession>B3PQ91</accession>
<reference key="1">
    <citation type="journal article" date="2010" name="Appl. Environ. Microbiol.">
        <title>Conserved symbiotic plasmid DNA sequences in the multireplicon pangenomic structure of Rhizobium etli.</title>
        <authorList>
            <person name="Gonzalez V."/>
            <person name="Acosta J.L."/>
            <person name="Santamaria R.I."/>
            <person name="Bustos P."/>
            <person name="Fernandez J.L."/>
            <person name="Hernandez Gonzalez I.L."/>
            <person name="Diaz R."/>
            <person name="Flores M."/>
            <person name="Palacios R."/>
            <person name="Mora J."/>
            <person name="Davila G."/>
        </authorList>
    </citation>
    <scope>NUCLEOTIDE SEQUENCE [LARGE SCALE GENOMIC DNA]</scope>
    <source>
        <strain>CIAT 652</strain>
    </source>
</reference>
<sequence length="320" mass="33586">MARNKIALIGSGMIGGTLAHLAGLKELGDIVLFDIADGIPQGKGLDIAQSSPVEGFDANLTGASDYSAIEGADVCIVTAGVPRKPGMSRDDLLGINLKVMEQVGAGIKKYAPNAFVICITNPLDAMVWALQKFSGLPANKVVGMAGVLDSSRFRLFLAKEFNVSVQDVTAFVLGGHGDTMVPLARYSTVGGIPLTDLVTMGWVTKERLEEIIQRTRDGGAEIVGLLKTGSAYYAPAASAIEMAESYLKDKKRVLPCAAHLTGQYGVKDMYVGVPTVIGAGGVERVIEIDLNKTEKEAFDKSVAAVAGLCEACINIAPALK</sequence>
<comment type="function">
    <text evidence="1">Catalyzes the reversible oxidation of malate to oxaloacetate.</text>
</comment>
<comment type="catalytic activity">
    <reaction evidence="1">
        <text>(S)-malate + NAD(+) = oxaloacetate + NADH + H(+)</text>
        <dbReference type="Rhea" id="RHEA:21432"/>
        <dbReference type="ChEBI" id="CHEBI:15378"/>
        <dbReference type="ChEBI" id="CHEBI:15589"/>
        <dbReference type="ChEBI" id="CHEBI:16452"/>
        <dbReference type="ChEBI" id="CHEBI:57540"/>
        <dbReference type="ChEBI" id="CHEBI:57945"/>
        <dbReference type="EC" id="1.1.1.37"/>
    </reaction>
</comment>
<comment type="similarity">
    <text evidence="1">Belongs to the LDH/MDH superfamily. MDH type 3 family.</text>
</comment>
<name>MDH_RHIE6</name>
<gene>
    <name evidence="1" type="primary">mdh</name>
    <name type="ordered locus">RHECIAT_CH0004174</name>
</gene>
<organism>
    <name type="scientific">Rhizobium etli (strain CIAT 652)</name>
    <dbReference type="NCBI Taxonomy" id="491916"/>
    <lineage>
        <taxon>Bacteria</taxon>
        <taxon>Pseudomonadati</taxon>
        <taxon>Pseudomonadota</taxon>
        <taxon>Alphaproteobacteria</taxon>
        <taxon>Hyphomicrobiales</taxon>
        <taxon>Rhizobiaceae</taxon>
        <taxon>Rhizobium/Agrobacterium group</taxon>
        <taxon>Rhizobium</taxon>
    </lineage>
</organism>
<proteinExistence type="inferred from homology"/>
<feature type="chain" id="PRO_1000126146" description="Malate dehydrogenase">
    <location>
        <begin position="1"/>
        <end position="320"/>
    </location>
</feature>
<feature type="active site" description="Proton acceptor" evidence="1">
    <location>
        <position position="176"/>
    </location>
</feature>
<feature type="binding site" evidence="1">
    <location>
        <begin position="10"/>
        <end position="15"/>
    </location>
    <ligand>
        <name>NAD(+)</name>
        <dbReference type="ChEBI" id="CHEBI:57540"/>
    </ligand>
</feature>
<feature type="binding site" evidence="1">
    <location>
        <position position="34"/>
    </location>
    <ligand>
        <name>NAD(+)</name>
        <dbReference type="ChEBI" id="CHEBI:57540"/>
    </ligand>
</feature>
<feature type="binding site" evidence="1">
    <location>
        <position position="83"/>
    </location>
    <ligand>
        <name>substrate</name>
    </ligand>
</feature>
<feature type="binding site" evidence="1">
    <location>
        <position position="89"/>
    </location>
    <ligand>
        <name>substrate</name>
    </ligand>
</feature>
<feature type="binding site" evidence="1">
    <location>
        <position position="96"/>
    </location>
    <ligand>
        <name>NAD(+)</name>
        <dbReference type="ChEBI" id="CHEBI:57540"/>
    </ligand>
</feature>
<feature type="binding site" evidence="1">
    <location>
        <begin position="119"/>
        <end position="121"/>
    </location>
    <ligand>
        <name>NAD(+)</name>
        <dbReference type="ChEBI" id="CHEBI:57540"/>
    </ligand>
</feature>
<feature type="binding site" evidence="1">
    <location>
        <position position="121"/>
    </location>
    <ligand>
        <name>substrate</name>
    </ligand>
</feature>
<feature type="binding site" evidence="1">
    <location>
        <position position="152"/>
    </location>
    <ligand>
        <name>substrate</name>
    </ligand>
</feature>
<protein>
    <recommendedName>
        <fullName evidence="1">Malate dehydrogenase</fullName>
        <ecNumber evidence="1">1.1.1.37</ecNumber>
    </recommendedName>
</protein>
<keyword id="KW-0520">NAD</keyword>
<keyword id="KW-0560">Oxidoreductase</keyword>
<keyword id="KW-0816">Tricarboxylic acid cycle</keyword>
<dbReference type="EC" id="1.1.1.37" evidence="1"/>
<dbReference type="EMBL" id="CP001074">
    <property type="protein sequence ID" value="ACE93103.1"/>
    <property type="molecule type" value="Genomic_DNA"/>
</dbReference>
<dbReference type="SMR" id="B3PQ91"/>
<dbReference type="KEGG" id="rec:RHECIAT_CH0004174"/>
<dbReference type="eggNOG" id="COG0039">
    <property type="taxonomic scope" value="Bacteria"/>
</dbReference>
<dbReference type="HOGENOM" id="CLU_045401_2_1_5"/>
<dbReference type="Proteomes" id="UP000008817">
    <property type="component" value="Chromosome"/>
</dbReference>
<dbReference type="GO" id="GO:0004459">
    <property type="term" value="F:L-lactate dehydrogenase activity"/>
    <property type="evidence" value="ECO:0007669"/>
    <property type="project" value="TreeGrafter"/>
</dbReference>
<dbReference type="GO" id="GO:0030060">
    <property type="term" value="F:L-malate dehydrogenase (NAD+) activity"/>
    <property type="evidence" value="ECO:0007669"/>
    <property type="project" value="UniProtKB-UniRule"/>
</dbReference>
<dbReference type="GO" id="GO:0006089">
    <property type="term" value="P:lactate metabolic process"/>
    <property type="evidence" value="ECO:0007669"/>
    <property type="project" value="TreeGrafter"/>
</dbReference>
<dbReference type="GO" id="GO:0006099">
    <property type="term" value="P:tricarboxylic acid cycle"/>
    <property type="evidence" value="ECO:0007669"/>
    <property type="project" value="UniProtKB-UniRule"/>
</dbReference>
<dbReference type="CDD" id="cd01339">
    <property type="entry name" value="LDH-like_MDH"/>
    <property type="match status" value="1"/>
</dbReference>
<dbReference type="FunFam" id="3.40.50.720:FF:000018">
    <property type="entry name" value="Malate dehydrogenase"/>
    <property type="match status" value="1"/>
</dbReference>
<dbReference type="FunFam" id="3.90.110.10:FF:000004">
    <property type="entry name" value="Malate dehydrogenase"/>
    <property type="match status" value="1"/>
</dbReference>
<dbReference type="Gene3D" id="3.90.110.10">
    <property type="entry name" value="Lactate dehydrogenase/glycoside hydrolase, family 4, C-terminal"/>
    <property type="match status" value="1"/>
</dbReference>
<dbReference type="Gene3D" id="3.40.50.720">
    <property type="entry name" value="NAD(P)-binding Rossmann-like Domain"/>
    <property type="match status" value="1"/>
</dbReference>
<dbReference type="HAMAP" id="MF_00487">
    <property type="entry name" value="Malate_dehydrog_3"/>
    <property type="match status" value="1"/>
</dbReference>
<dbReference type="InterPro" id="IPR001557">
    <property type="entry name" value="L-lactate/malate_DH"/>
</dbReference>
<dbReference type="InterPro" id="IPR022383">
    <property type="entry name" value="Lactate/malate_DH_C"/>
</dbReference>
<dbReference type="InterPro" id="IPR001236">
    <property type="entry name" value="Lactate/malate_DH_N"/>
</dbReference>
<dbReference type="InterPro" id="IPR015955">
    <property type="entry name" value="Lactate_DH/Glyco_Ohase_4_C"/>
</dbReference>
<dbReference type="InterPro" id="IPR011275">
    <property type="entry name" value="Malate_DH_type3"/>
</dbReference>
<dbReference type="InterPro" id="IPR036291">
    <property type="entry name" value="NAD(P)-bd_dom_sf"/>
</dbReference>
<dbReference type="NCBIfam" id="TIGR01763">
    <property type="entry name" value="MalateDH_bact"/>
    <property type="match status" value="1"/>
</dbReference>
<dbReference type="NCBIfam" id="NF004863">
    <property type="entry name" value="PRK06223.1"/>
    <property type="match status" value="1"/>
</dbReference>
<dbReference type="PANTHER" id="PTHR43128">
    <property type="entry name" value="L-2-HYDROXYCARBOXYLATE DEHYDROGENASE (NAD(P)(+))"/>
    <property type="match status" value="1"/>
</dbReference>
<dbReference type="PANTHER" id="PTHR43128:SF16">
    <property type="entry name" value="L-LACTATE DEHYDROGENASE"/>
    <property type="match status" value="1"/>
</dbReference>
<dbReference type="Pfam" id="PF02866">
    <property type="entry name" value="Ldh_1_C"/>
    <property type="match status" value="1"/>
</dbReference>
<dbReference type="Pfam" id="PF00056">
    <property type="entry name" value="Ldh_1_N"/>
    <property type="match status" value="1"/>
</dbReference>
<dbReference type="PIRSF" id="PIRSF000102">
    <property type="entry name" value="Lac_mal_DH"/>
    <property type="match status" value="1"/>
</dbReference>
<dbReference type="PRINTS" id="PR00086">
    <property type="entry name" value="LLDHDRGNASE"/>
</dbReference>
<dbReference type="SUPFAM" id="SSF56327">
    <property type="entry name" value="LDH C-terminal domain-like"/>
    <property type="match status" value="1"/>
</dbReference>
<dbReference type="SUPFAM" id="SSF51735">
    <property type="entry name" value="NAD(P)-binding Rossmann-fold domains"/>
    <property type="match status" value="1"/>
</dbReference>
<evidence type="ECO:0000255" key="1">
    <source>
        <dbReference type="HAMAP-Rule" id="MF_00487"/>
    </source>
</evidence>